<proteinExistence type="inferred from homology"/>
<feature type="chain" id="PRO_0000156248" description="Phosphopantetheine adenylyltransferase">
    <location>
        <begin position="1"/>
        <end position="158"/>
    </location>
</feature>
<feature type="binding site" evidence="1">
    <location>
        <begin position="9"/>
        <end position="10"/>
    </location>
    <ligand>
        <name>ATP</name>
        <dbReference type="ChEBI" id="CHEBI:30616"/>
    </ligand>
</feature>
<feature type="binding site" evidence="1">
    <location>
        <position position="9"/>
    </location>
    <ligand>
        <name>substrate</name>
    </ligand>
</feature>
<feature type="binding site" evidence="1">
    <location>
        <position position="17"/>
    </location>
    <ligand>
        <name>ATP</name>
        <dbReference type="ChEBI" id="CHEBI:30616"/>
    </ligand>
</feature>
<feature type="binding site" evidence="1">
    <location>
        <position position="41"/>
    </location>
    <ligand>
        <name>substrate</name>
    </ligand>
</feature>
<feature type="binding site" evidence="1">
    <location>
        <position position="73"/>
    </location>
    <ligand>
        <name>substrate</name>
    </ligand>
</feature>
<feature type="binding site" evidence="1">
    <location>
        <position position="87"/>
    </location>
    <ligand>
        <name>substrate</name>
    </ligand>
</feature>
<feature type="binding site" evidence="1">
    <location>
        <begin position="88"/>
        <end position="90"/>
    </location>
    <ligand>
        <name>ATP</name>
        <dbReference type="ChEBI" id="CHEBI:30616"/>
    </ligand>
</feature>
<feature type="binding site" evidence="1">
    <location>
        <position position="98"/>
    </location>
    <ligand>
        <name>ATP</name>
        <dbReference type="ChEBI" id="CHEBI:30616"/>
    </ligand>
</feature>
<feature type="binding site" evidence="1">
    <location>
        <begin position="123"/>
        <end position="129"/>
    </location>
    <ligand>
        <name>ATP</name>
        <dbReference type="ChEBI" id="CHEBI:30616"/>
    </ligand>
</feature>
<feature type="site" description="Transition state stabilizer" evidence="1">
    <location>
        <position position="17"/>
    </location>
</feature>
<keyword id="KW-0067">ATP-binding</keyword>
<keyword id="KW-0173">Coenzyme A biosynthesis</keyword>
<keyword id="KW-0963">Cytoplasm</keyword>
<keyword id="KW-0460">Magnesium</keyword>
<keyword id="KW-0547">Nucleotide-binding</keyword>
<keyword id="KW-0548">Nucleotidyltransferase</keyword>
<keyword id="KW-1185">Reference proteome</keyword>
<keyword id="KW-0808">Transferase</keyword>
<organism>
    <name type="scientific">Pasteurella multocida (strain Pm70)</name>
    <dbReference type="NCBI Taxonomy" id="272843"/>
    <lineage>
        <taxon>Bacteria</taxon>
        <taxon>Pseudomonadati</taxon>
        <taxon>Pseudomonadota</taxon>
        <taxon>Gammaproteobacteria</taxon>
        <taxon>Pasteurellales</taxon>
        <taxon>Pasteurellaceae</taxon>
        <taxon>Pasteurella</taxon>
    </lineage>
</organism>
<comment type="function">
    <text evidence="1">Reversibly transfers an adenylyl group from ATP to 4'-phosphopantetheine, yielding dephospho-CoA (dPCoA) and pyrophosphate.</text>
</comment>
<comment type="catalytic activity">
    <reaction evidence="1">
        <text>(R)-4'-phosphopantetheine + ATP + H(+) = 3'-dephospho-CoA + diphosphate</text>
        <dbReference type="Rhea" id="RHEA:19801"/>
        <dbReference type="ChEBI" id="CHEBI:15378"/>
        <dbReference type="ChEBI" id="CHEBI:30616"/>
        <dbReference type="ChEBI" id="CHEBI:33019"/>
        <dbReference type="ChEBI" id="CHEBI:57328"/>
        <dbReference type="ChEBI" id="CHEBI:61723"/>
        <dbReference type="EC" id="2.7.7.3"/>
    </reaction>
</comment>
<comment type="cofactor">
    <cofactor evidence="1">
        <name>Mg(2+)</name>
        <dbReference type="ChEBI" id="CHEBI:18420"/>
    </cofactor>
</comment>
<comment type="pathway">
    <text evidence="1">Cofactor biosynthesis; coenzyme A biosynthesis; CoA from (R)-pantothenate: step 4/5.</text>
</comment>
<comment type="subunit">
    <text evidence="1">Homohexamer.</text>
</comment>
<comment type="subcellular location">
    <subcellularLocation>
        <location evidence="1">Cytoplasm</location>
    </subcellularLocation>
</comment>
<comment type="similarity">
    <text evidence="1">Belongs to the bacterial CoaD family.</text>
</comment>
<sequence length="158" mass="17731">MITVIYPGTFDPITNGHLDIIQRTARLFPNVLVAVASNPNKKPLFDLATRVELVKQAVAHLPNVTVVGFLDLLADVVKERNITAIIRGVRSASDFDYELQLAHLNRLLTNGVESLFFPPSERWSYVSSTMIREIHLHHGDVSQLVPEVVFHALQNLKK</sequence>
<gene>
    <name evidence="1" type="primary">coaD</name>
    <name type="synonym">kdtB</name>
    <name type="ordered locus">PM1304</name>
</gene>
<evidence type="ECO:0000255" key="1">
    <source>
        <dbReference type="HAMAP-Rule" id="MF_00151"/>
    </source>
</evidence>
<name>COAD_PASMU</name>
<dbReference type="EC" id="2.7.7.3" evidence="1"/>
<dbReference type="EMBL" id="AE004439">
    <property type="protein sequence ID" value="AAK03388.1"/>
    <property type="molecule type" value="Genomic_DNA"/>
</dbReference>
<dbReference type="RefSeq" id="WP_005723869.1">
    <property type="nucleotide sequence ID" value="NC_002663.1"/>
</dbReference>
<dbReference type="SMR" id="Q9CLD4"/>
<dbReference type="STRING" id="272843.PM1304"/>
<dbReference type="EnsemblBacteria" id="AAK03388">
    <property type="protein sequence ID" value="AAK03388"/>
    <property type="gene ID" value="PM1304"/>
</dbReference>
<dbReference type="GeneID" id="77206742"/>
<dbReference type="KEGG" id="pmu:PM1304"/>
<dbReference type="HOGENOM" id="CLU_100149_0_1_6"/>
<dbReference type="OrthoDB" id="9806661at2"/>
<dbReference type="UniPathway" id="UPA00241">
    <property type="reaction ID" value="UER00355"/>
</dbReference>
<dbReference type="Proteomes" id="UP000000809">
    <property type="component" value="Chromosome"/>
</dbReference>
<dbReference type="GO" id="GO:0005737">
    <property type="term" value="C:cytoplasm"/>
    <property type="evidence" value="ECO:0007669"/>
    <property type="project" value="UniProtKB-SubCell"/>
</dbReference>
<dbReference type="GO" id="GO:0005524">
    <property type="term" value="F:ATP binding"/>
    <property type="evidence" value="ECO:0007669"/>
    <property type="project" value="UniProtKB-KW"/>
</dbReference>
<dbReference type="GO" id="GO:0004595">
    <property type="term" value="F:pantetheine-phosphate adenylyltransferase activity"/>
    <property type="evidence" value="ECO:0007669"/>
    <property type="project" value="UniProtKB-UniRule"/>
</dbReference>
<dbReference type="GO" id="GO:0015937">
    <property type="term" value="P:coenzyme A biosynthetic process"/>
    <property type="evidence" value="ECO:0007669"/>
    <property type="project" value="UniProtKB-UniRule"/>
</dbReference>
<dbReference type="CDD" id="cd02163">
    <property type="entry name" value="PPAT"/>
    <property type="match status" value="1"/>
</dbReference>
<dbReference type="Gene3D" id="3.40.50.620">
    <property type="entry name" value="HUPs"/>
    <property type="match status" value="1"/>
</dbReference>
<dbReference type="HAMAP" id="MF_00151">
    <property type="entry name" value="PPAT_bact"/>
    <property type="match status" value="1"/>
</dbReference>
<dbReference type="InterPro" id="IPR004821">
    <property type="entry name" value="Cyt_trans-like"/>
</dbReference>
<dbReference type="InterPro" id="IPR001980">
    <property type="entry name" value="PPAT"/>
</dbReference>
<dbReference type="InterPro" id="IPR014729">
    <property type="entry name" value="Rossmann-like_a/b/a_fold"/>
</dbReference>
<dbReference type="NCBIfam" id="TIGR01510">
    <property type="entry name" value="coaD_prev_kdtB"/>
    <property type="match status" value="1"/>
</dbReference>
<dbReference type="NCBIfam" id="TIGR00125">
    <property type="entry name" value="cyt_tran_rel"/>
    <property type="match status" value="1"/>
</dbReference>
<dbReference type="PANTHER" id="PTHR21342">
    <property type="entry name" value="PHOSPHOPANTETHEINE ADENYLYLTRANSFERASE"/>
    <property type="match status" value="1"/>
</dbReference>
<dbReference type="PANTHER" id="PTHR21342:SF1">
    <property type="entry name" value="PHOSPHOPANTETHEINE ADENYLYLTRANSFERASE"/>
    <property type="match status" value="1"/>
</dbReference>
<dbReference type="Pfam" id="PF01467">
    <property type="entry name" value="CTP_transf_like"/>
    <property type="match status" value="1"/>
</dbReference>
<dbReference type="PRINTS" id="PR01020">
    <property type="entry name" value="LPSBIOSNTHSS"/>
</dbReference>
<dbReference type="SUPFAM" id="SSF52374">
    <property type="entry name" value="Nucleotidylyl transferase"/>
    <property type="match status" value="1"/>
</dbReference>
<protein>
    <recommendedName>
        <fullName evidence="1">Phosphopantetheine adenylyltransferase</fullName>
        <ecNumber evidence="1">2.7.7.3</ecNumber>
    </recommendedName>
    <alternativeName>
        <fullName evidence="1">Dephospho-CoA pyrophosphorylase</fullName>
    </alternativeName>
    <alternativeName>
        <fullName evidence="1">Pantetheine-phosphate adenylyltransferase</fullName>
        <shortName evidence="1">PPAT</shortName>
    </alternativeName>
</protein>
<accession>Q9CLD4</accession>
<reference key="1">
    <citation type="journal article" date="2001" name="Proc. Natl. Acad. Sci. U.S.A.">
        <title>Complete genomic sequence of Pasteurella multocida Pm70.</title>
        <authorList>
            <person name="May B.J."/>
            <person name="Zhang Q."/>
            <person name="Li L.L."/>
            <person name="Paustian M.L."/>
            <person name="Whittam T.S."/>
            <person name="Kapur V."/>
        </authorList>
    </citation>
    <scope>NUCLEOTIDE SEQUENCE [LARGE SCALE GENOMIC DNA]</scope>
    <source>
        <strain>Pm70</strain>
    </source>
</reference>